<reference key="1">
    <citation type="submission" date="1999-04" db="EMBL/GenBank/DDBJ databases">
        <title>Structural analysis of Arabidopsis thaliana chromosome 5. XI.</title>
        <authorList>
            <person name="Kaneko T."/>
            <person name="Katoh T."/>
            <person name="Asamizu E."/>
            <person name="Sato S."/>
            <person name="Nakamura Y."/>
            <person name="Kotani H."/>
            <person name="Tabata S."/>
        </authorList>
    </citation>
    <scope>NUCLEOTIDE SEQUENCE [LARGE SCALE GENOMIC DNA]</scope>
    <source>
        <strain>cv. Columbia</strain>
    </source>
</reference>
<reference key="2">
    <citation type="journal article" date="2017" name="Plant J.">
        <title>Araport11: a complete reannotation of the Arabidopsis thaliana reference genome.</title>
        <authorList>
            <person name="Cheng C.Y."/>
            <person name="Krishnakumar V."/>
            <person name="Chan A.P."/>
            <person name="Thibaud-Nissen F."/>
            <person name="Schobel S."/>
            <person name="Town C.D."/>
        </authorList>
    </citation>
    <scope>GENOME REANNOTATION</scope>
    <source>
        <strain>cv. Columbia</strain>
    </source>
</reference>
<reference key="3">
    <citation type="submission" date="2004-04" db="EMBL/GenBank/DDBJ databases">
        <title>Arabidopsis ORF clones.</title>
        <authorList>
            <person name="Kim C.J."/>
            <person name="Chen H."/>
            <person name="Cheuk R."/>
            <person name="Shinn P."/>
            <person name="Carninci P."/>
            <person name="Hayashizaki Y."/>
            <person name="Ishida J."/>
            <person name="Kamiya A."/>
            <person name="Kawai J."/>
            <person name="Narusaka M."/>
            <person name="Sakurai T."/>
            <person name="Satou M."/>
            <person name="Seki M."/>
            <person name="Shinozaki K."/>
            <person name="Ecker J.R."/>
        </authorList>
    </citation>
    <scope>NUCLEOTIDE SEQUENCE [LARGE SCALE MRNA]</scope>
    <source>
        <strain>cv. Columbia</strain>
    </source>
</reference>
<reference key="4">
    <citation type="submission" date="2004-09" db="EMBL/GenBank/DDBJ databases">
        <title>Large-scale analysis of RIKEN Arabidopsis full-length (RAFL) cDNAs.</title>
        <authorList>
            <person name="Totoki Y."/>
            <person name="Seki M."/>
            <person name="Ishida J."/>
            <person name="Nakajima M."/>
            <person name="Enju A."/>
            <person name="Kamiya A."/>
            <person name="Narusaka M."/>
            <person name="Shin-i T."/>
            <person name="Nakagawa M."/>
            <person name="Sakamoto N."/>
            <person name="Oishi K."/>
            <person name="Kohara Y."/>
            <person name="Kobayashi M."/>
            <person name="Toyoda A."/>
            <person name="Sakaki Y."/>
            <person name="Sakurai T."/>
            <person name="Iida K."/>
            <person name="Akiyama K."/>
            <person name="Satou M."/>
            <person name="Toyoda T."/>
            <person name="Konagaya A."/>
            <person name="Carninci P."/>
            <person name="Kawai J."/>
            <person name="Hayashizaki Y."/>
            <person name="Shinozaki K."/>
        </authorList>
    </citation>
    <scope>NUCLEOTIDE SEQUENCE [LARGE SCALE MRNA]</scope>
    <source>
        <strain>cv. Columbia</strain>
    </source>
</reference>
<reference key="5">
    <citation type="journal article" date="2004" name="J. Plant Physiol.">
        <title>Analysis of an Arabidopsis thaliana protein family, structurally related to cytochromes b561 and potentially involved in catecholamine biochemistry in plants.</title>
        <authorList>
            <person name="Verelst W."/>
            <person name="Asard H."/>
        </authorList>
    </citation>
    <scope>DOMAIN</scope>
    <scope>FUNCTION</scope>
</reference>
<reference key="6">
    <citation type="journal article" date="2005" name="Biochim. Biophys. Acta">
        <title>Cytochrome b561 protein family: expanding roles and versatile transmembrane electron transfer abilities as predicted by a new classification system and protein sequence motif analyses.</title>
        <authorList>
            <person name="Tsubaki M."/>
            <person name="Takeuchi F."/>
            <person name="Nakanishi N."/>
        </authorList>
    </citation>
    <scope>GENE FAMILY</scope>
    <scope>NOMENCLATURE</scope>
</reference>
<reference key="7">
    <citation type="journal article" date="2009" name="Plant Physiol.">
        <title>Auxin-responsive genes AIR12 code for a new family of plasma membrane b-type cytochromes specific to flowering plants.</title>
        <authorList>
            <person name="Preger V."/>
            <person name="Tango N."/>
            <person name="Marchand C."/>
            <person name="Lemaire S.D."/>
            <person name="Carbonera D."/>
            <person name="Di Valentin M."/>
            <person name="Costa A."/>
            <person name="Pupillo P."/>
            <person name="Trost P."/>
        </authorList>
    </citation>
    <scope>DOMAIN</scope>
</reference>
<reference key="8">
    <citation type="journal article" date="2013" name="Antioxid. Redox Signal.">
        <title>Cytochromes b561: ascorbate-mediated trans-membrane electron transport.</title>
        <authorList>
            <person name="Asard H."/>
            <person name="Barbaro R."/>
            <person name="Trost P."/>
            <person name="Berczi A."/>
        </authorList>
    </citation>
    <scope>REVIEW</scope>
</reference>
<accession>Q9FGK4</accession>
<name>B561J_ARATH</name>
<feature type="signal peptide" evidence="2">
    <location>
        <begin position="1"/>
        <end position="24"/>
    </location>
</feature>
<feature type="chain" id="PRO_0000430478" description="Cytochrome b561 and DOMON domain-containing protein At5g47530">
    <location>
        <begin position="25"/>
        <end position="395"/>
    </location>
</feature>
<feature type="transmembrane region" description="Helical; Name=1" evidence="2">
    <location>
        <begin position="210"/>
        <end position="230"/>
    </location>
</feature>
<feature type="transmembrane region" description="Helical; Name=2" evidence="2">
    <location>
        <begin position="242"/>
        <end position="262"/>
    </location>
</feature>
<feature type="transmembrane region" description="Helical; Name=3" evidence="2">
    <location>
        <begin position="282"/>
        <end position="302"/>
    </location>
</feature>
<feature type="transmembrane region" description="Helical; Name=4" evidence="2">
    <location>
        <begin position="318"/>
        <end position="338"/>
    </location>
</feature>
<feature type="transmembrane region" description="Helical; Name=5" evidence="2">
    <location>
        <begin position="351"/>
        <end position="371"/>
    </location>
</feature>
<feature type="domain" description="DOMON" evidence="4">
    <location>
        <begin position="47"/>
        <end position="162"/>
    </location>
</feature>
<feature type="domain" description="Cytochrome b561" evidence="3">
    <location>
        <begin position="176"/>
        <end position="371"/>
    </location>
</feature>
<feature type="binding site" description="axial binding residue" evidence="1">
    <location>
        <position position="211"/>
    </location>
    <ligand>
        <name>heme b</name>
        <dbReference type="ChEBI" id="CHEBI:60344"/>
        <label>1</label>
    </ligand>
    <ligandPart>
        <name>Fe</name>
        <dbReference type="ChEBI" id="CHEBI:18248"/>
    </ligandPart>
</feature>
<feature type="binding site" description="axial binding residue" evidence="1">
    <location>
        <position position="247"/>
    </location>
    <ligand>
        <name>heme b</name>
        <dbReference type="ChEBI" id="CHEBI:60344"/>
        <label>2</label>
    </ligand>
    <ligandPart>
        <name>Fe</name>
        <dbReference type="ChEBI" id="CHEBI:18248"/>
    </ligandPart>
</feature>
<feature type="binding site" description="axial binding residue" evidence="1">
    <location>
        <position position="280"/>
    </location>
    <ligand>
        <name>heme b</name>
        <dbReference type="ChEBI" id="CHEBI:60344"/>
        <label>1</label>
    </ligand>
    <ligandPart>
        <name>Fe</name>
        <dbReference type="ChEBI" id="CHEBI:18248"/>
    </ligandPart>
</feature>
<feature type="binding site" description="axial binding residue" evidence="1">
    <location>
        <position position="316"/>
    </location>
    <ligand>
        <name>heme b</name>
        <dbReference type="ChEBI" id="CHEBI:60344"/>
        <label>2</label>
    </ligand>
    <ligandPart>
        <name>Fe</name>
        <dbReference type="ChEBI" id="CHEBI:18248"/>
    </ligandPart>
</feature>
<organism>
    <name type="scientific">Arabidopsis thaliana</name>
    <name type="common">Mouse-ear cress</name>
    <dbReference type="NCBI Taxonomy" id="3702"/>
    <lineage>
        <taxon>Eukaryota</taxon>
        <taxon>Viridiplantae</taxon>
        <taxon>Streptophyta</taxon>
        <taxon>Embryophyta</taxon>
        <taxon>Tracheophyta</taxon>
        <taxon>Spermatophyta</taxon>
        <taxon>Magnoliopsida</taxon>
        <taxon>eudicotyledons</taxon>
        <taxon>Gunneridae</taxon>
        <taxon>Pentapetalae</taxon>
        <taxon>rosids</taxon>
        <taxon>malvids</taxon>
        <taxon>Brassicales</taxon>
        <taxon>Brassicaceae</taxon>
        <taxon>Camelineae</taxon>
        <taxon>Arabidopsis</taxon>
    </lineage>
</organism>
<protein>
    <recommendedName>
        <fullName>Cytochrome b561 and DOMON domain-containing protein At5g47530</fullName>
    </recommendedName>
    <alternativeName>
        <fullName>Protein b561A.tha10</fullName>
    </alternativeName>
</protein>
<gene>
    <name type="ordered locus">At5g47530</name>
    <name type="ORF">MNJ7.12</name>
</gene>
<comment type="function">
    <text evidence="5">May act as a catecholamine-responsive trans-membrane electron transporter.</text>
</comment>
<comment type="cofactor">
    <cofactor evidence="1">
        <name>heme b</name>
        <dbReference type="ChEBI" id="CHEBI:60344"/>
    </cofactor>
    <text evidence="1">Binds 2 heme b groups non-covalently.</text>
</comment>
<comment type="subcellular location">
    <subcellularLocation>
        <location evidence="7">Membrane</location>
        <topology evidence="7">Multi-pass membrane protein</topology>
    </subcellularLocation>
</comment>
<comment type="domain">
    <text evidence="5 6">DOMON domain could bind catecholamines and thereby could regulate the cytochrome b561 domain function (PubMed:15022831). DOMON domain could bind one heme b (PubMed:19386804).</text>
</comment>
<evidence type="ECO:0000250" key="1">
    <source>
        <dbReference type="UniProtKB" id="Q9SWS1"/>
    </source>
</evidence>
<evidence type="ECO:0000255" key="2"/>
<evidence type="ECO:0000255" key="3">
    <source>
        <dbReference type="PROSITE-ProRule" id="PRU00242"/>
    </source>
</evidence>
<evidence type="ECO:0000255" key="4">
    <source>
        <dbReference type="PROSITE-ProRule" id="PRU00246"/>
    </source>
</evidence>
<evidence type="ECO:0000269" key="5">
    <source>
    </source>
</evidence>
<evidence type="ECO:0000269" key="6">
    <source>
    </source>
</evidence>
<evidence type="ECO:0000305" key="7"/>
<dbReference type="EMBL" id="AB025628">
    <property type="protein sequence ID" value="BAB09079.1"/>
    <property type="molecule type" value="Genomic_DNA"/>
</dbReference>
<dbReference type="EMBL" id="CP002688">
    <property type="protein sequence ID" value="AED95529.1"/>
    <property type="molecule type" value="Genomic_DNA"/>
</dbReference>
<dbReference type="EMBL" id="BT012551">
    <property type="protein sequence ID" value="AAS99695.1"/>
    <property type="molecule type" value="mRNA"/>
</dbReference>
<dbReference type="EMBL" id="AK176454">
    <property type="protein sequence ID" value="BAD44217.1"/>
    <property type="molecule type" value="mRNA"/>
</dbReference>
<dbReference type="RefSeq" id="NP_199564.1">
    <property type="nucleotide sequence ID" value="NM_124126.3"/>
</dbReference>
<dbReference type="BioGRID" id="20051">
    <property type="interactions" value="47"/>
</dbReference>
<dbReference type="FunCoup" id="Q9FGK4">
    <property type="interactions" value="1"/>
</dbReference>
<dbReference type="IntAct" id="Q9FGK4">
    <property type="interactions" value="46"/>
</dbReference>
<dbReference type="STRING" id="3702.Q9FGK4"/>
<dbReference type="PaxDb" id="3702-AT5G47530.1"/>
<dbReference type="ProteomicsDB" id="241192"/>
<dbReference type="EnsemblPlants" id="AT5G47530.1">
    <property type="protein sequence ID" value="AT5G47530.1"/>
    <property type="gene ID" value="AT5G47530"/>
</dbReference>
<dbReference type="GeneID" id="834803"/>
<dbReference type="Gramene" id="AT5G47530.1">
    <property type="protein sequence ID" value="AT5G47530.1"/>
    <property type="gene ID" value="AT5G47530"/>
</dbReference>
<dbReference type="KEGG" id="ath:AT5G47530"/>
<dbReference type="Araport" id="AT5G47530"/>
<dbReference type="TAIR" id="AT5G47530"/>
<dbReference type="eggNOG" id="KOG4293">
    <property type="taxonomic scope" value="Eukaryota"/>
</dbReference>
<dbReference type="HOGENOM" id="CLU_036675_1_0_1"/>
<dbReference type="InParanoid" id="Q9FGK4"/>
<dbReference type="OMA" id="NNEMVIY"/>
<dbReference type="PhylomeDB" id="Q9FGK4"/>
<dbReference type="PRO" id="PR:Q9FGK4"/>
<dbReference type="Proteomes" id="UP000006548">
    <property type="component" value="Chromosome 5"/>
</dbReference>
<dbReference type="ExpressionAtlas" id="Q9FGK4">
    <property type="expression patterns" value="baseline and differential"/>
</dbReference>
<dbReference type="GO" id="GO:0016020">
    <property type="term" value="C:membrane"/>
    <property type="evidence" value="ECO:0007669"/>
    <property type="project" value="UniProtKB-SubCell"/>
</dbReference>
<dbReference type="GO" id="GO:0046872">
    <property type="term" value="F:metal ion binding"/>
    <property type="evidence" value="ECO:0007669"/>
    <property type="project" value="UniProtKB-KW"/>
</dbReference>
<dbReference type="CDD" id="cd08760">
    <property type="entry name" value="Cyt_b561_FRRS1_like"/>
    <property type="match status" value="1"/>
</dbReference>
<dbReference type="CDD" id="cd09629">
    <property type="entry name" value="DOMON_CIL1_like"/>
    <property type="match status" value="1"/>
</dbReference>
<dbReference type="FunFam" id="1.20.120.1770:FF:000007">
    <property type="entry name" value="Cytochrome b561 and DOMON domain-containing protein"/>
    <property type="match status" value="1"/>
</dbReference>
<dbReference type="Gene3D" id="1.20.120.1770">
    <property type="match status" value="1"/>
</dbReference>
<dbReference type="InterPro" id="IPR045265">
    <property type="entry name" value="AIR12_DOMON"/>
</dbReference>
<dbReference type="InterPro" id="IPR006593">
    <property type="entry name" value="Cyt_b561/ferric_Rdtase_TM"/>
</dbReference>
<dbReference type="InterPro" id="IPR005018">
    <property type="entry name" value="DOMON_domain"/>
</dbReference>
<dbReference type="InterPro" id="IPR017214">
    <property type="entry name" value="UCP037471"/>
</dbReference>
<dbReference type="PANTHER" id="PTHR23130">
    <property type="entry name" value="CYTOCHROME B561 AND DOMON DOMAIN-CONTAINING PROTEIN"/>
    <property type="match status" value="1"/>
</dbReference>
<dbReference type="PANTHER" id="PTHR23130:SF167">
    <property type="entry name" value="CYTOCHROME B561 AND DOMON DOMAIN-CONTAINING PROTEIN"/>
    <property type="match status" value="1"/>
</dbReference>
<dbReference type="Pfam" id="PF03188">
    <property type="entry name" value="Cytochrom_B561"/>
    <property type="match status" value="1"/>
</dbReference>
<dbReference type="Pfam" id="PF04526">
    <property type="entry name" value="DUF568"/>
    <property type="match status" value="1"/>
</dbReference>
<dbReference type="PIRSF" id="PIRSF037471">
    <property type="entry name" value="UCP037471"/>
    <property type="match status" value="1"/>
</dbReference>
<dbReference type="SMART" id="SM00665">
    <property type="entry name" value="B561"/>
    <property type="match status" value="1"/>
</dbReference>
<dbReference type="PROSITE" id="PS50939">
    <property type="entry name" value="CYTOCHROME_B561"/>
    <property type="match status" value="1"/>
</dbReference>
<dbReference type="PROSITE" id="PS50836">
    <property type="entry name" value="DOMON"/>
    <property type="match status" value="1"/>
</dbReference>
<proteinExistence type="evidence at transcript level"/>
<keyword id="KW-0249">Electron transport</keyword>
<keyword id="KW-0349">Heme</keyword>
<keyword id="KW-0408">Iron</keyword>
<keyword id="KW-0472">Membrane</keyword>
<keyword id="KW-0479">Metal-binding</keyword>
<keyword id="KW-1185">Reference proteome</keyword>
<keyword id="KW-0732">Signal</keyword>
<keyword id="KW-0812">Transmembrane</keyword>
<keyword id="KW-1133">Transmembrane helix</keyword>
<keyword id="KW-0813">Transport</keyword>
<sequence length="395" mass="42998">MAISSNLLLCLSLFIFIITKSALAQKCSNYKFSTNRLFESCNDLPVLDSFLHYTYDSSSGNLQIAYRHTKLTPGKWVAWAVNPTSTGMVGAQAIVAYPQSDGTVRAYTSPISSYQTSLLEAELSFNVSQLSATYQNNEMVIYAILNLPLANGGIINTVWQDGSLSGNNPLPHPTSGNNVRSVSTLNLVSGASGSTSTGAGGASKLRKRNIHGILNGVSWGIMMPIGAIIARYLKVSKSADPAWFYLHVFCQSSAYIIGVAGWATGLKLGNESAGIQFTFHRAVGIALFCLATIQVFAMFLRPKPEHKYRVYWNIYHHTVGYSVIILAVVNVFKGLDILSPEKQWRNAYTAIIVVLGIVAVVLEGFTWYVVIKRGKAEASAKTSQRVGNDGRSLYV</sequence>